<gene>
    <name evidence="2" type="primary">uvsE</name>
    <name type="ordered locus">BcerKBAB4_5145</name>
</gene>
<protein>
    <recommendedName>
        <fullName evidence="2">UV DNA damage endonuclease</fullName>
        <shortName evidence="2">UV-endonuclease</shortName>
        <shortName evidence="2">UVED</shortName>
        <ecNumber evidence="2">3.-.-.-</ecNumber>
    </recommendedName>
</protein>
<feature type="chain" id="PRO_1000130232" description="UV DNA damage endonuclease">
    <location>
        <begin position="1"/>
        <end position="317"/>
    </location>
</feature>
<comment type="function">
    <text evidence="1">Component in a DNA repair pathway. Removal of UV LIGHT damaged nucleotides. Recognizes pyrimidine dimers and cleave a phosphodiester bond immediately 5' to the lesion (By similarity).</text>
</comment>
<comment type="similarity">
    <text evidence="2">Belongs to the uve1/UvsE family.</text>
</comment>
<organism>
    <name type="scientific">Bacillus mycoides (strain KBAB4)</name>
    <name type="common">Bacillus weihenstephanensis</name>
    <dbReference type="NCBI Taxonomy" id="315730"/>
    <lineage>
        <taxon>Bacteria</taxon>
        <taxon>Bacillati</taxon>
        <taxon>Bacillota</taxon>
        <taxon>Bacilli</taxon>
        <taxon>Bacillales</taxon>
        <taxon>Bacillaceae</taxon>
        <taxon>Bacillus</taxon>
        <taxon>Bacillus cereus group</taxon>
    </lineage>
</organism>
<name>UVSE_BACMK</name>
<dbReference type="EC" id="3.-.-.-" evidence="2"/>
<dbReference type="EMBL" id="CP000903">
    <property type="protein sequence ID" value="ABY46291.1"/>
    <property type="molecule type" value="Genomic_DNA"/>
</dbReference>
<dbReference type="RefSeq" id="WP_002143890.1">
    <property type="nucleotide sequence ID" value="NC_010184.1"/>
</dbReference>
<dbReference type="SMR" id="A9VSE5"/>
<dbReference type="KEGG" id="bwe:BcerKBAB4_5145"/>
<dbReference type="eggNOG" id="COG4294">
    <property type="taxonomic scope" value="Bacteria"/>
</dbReference>
<dbReference type="HOGENOM" id="CLU_017168_0_1_9"/>
<dbReference type="Proteomes" id="UP000002154">
    <property type="component" value="Chromosome"/>
</dbReference>
<dbReference type="GO" id="GO:0004519">
    <property type="term" value="F:endonuclease activity"/>
    <property type="evidence" value="ECO:0007669"/>
    <property type="project" value="UniProtKB-UniRule"/>
</dbReference>
<dbReference type="GO" id="GO:0006289">
    <property type="term" value="P:nucleotide-excision repair"/>
    <property type="evidence" value="ECO:0007669"/>
    <property type="project" value="InterPro"/>
</dbReference>
<dbReference type="GO" id="GO:0006290">
    <property type="term" value="P:pyrimidine dimer repair"/>
    <property type="evidence" value="ECO:0007669"/>
    <property type="project" value="UniProtKB-UniRule"/>
</dbReference>
<dbReference type="GO" id="GO:0009411">
    <property type="term" value="P:response to UV"/>
    <property type="evidence" value="ECO:0007669"/>
    <property type="project" value="InterPro"/>
</dbReference>
<dbReference type="Gene3D" id="3.20.20.150">
    <property type="entry name" value="Divalent-metal-dependent TIM barrel enzymes"/>
    <property type="match status" value="1"/>
</dbReference>
<dbReference type="HAMAP" id="MF_00606">
    <property type="entry name" value="UV_endonuclease"/>
    <property type="match status" value="1"/>
</dbReference>
<dbReference type="InterPro" id="IPR004601">
    <property type="entry name" value="UvdE"/>
</dbReference>
<dbReference type="InterPro" id="IPR023520">
    <property type="entry name" value="UvdE_bac"/>
</dbReference>
<dbReference type="InterPro" id="IPR036237">
    <property type="entry name" value="Xyl_isomerase-like_sf"/>
</dbReference>
<dbReference type="NCBIfam" id="TIGR00629">
    <property type="entry name" value="uvde"/>
    <property type="match status" value="1"/>
</dbReference>
<dbReference type="PANTHER" id="PTHR31290">
    <property type="entry name" value="UV-DAMAGE ENDONUCLEASE"/>
    <property type="match status" value="1"/>
</dbReference>
<dbReference type="PANTHER" id="PTHR31290:SF5">
    <property type="entry name" value="UV-DAMAGE ENDONUCLEASE"/>
    <property type="match status" value="1"/>
</dbReference>
<dbReference type="Pfam" id="PF03851">
    <property type="entry name" value="UvdE"/>
    <property type="match status" value="1"/>
</dbReference>
<dbReference type="SUPFAM" id="SSF51658">
    <property type="entry name" value="Xylose isomerase-like"/>
    <property type="match status" value="1"/>
</dbReference>
<accession>A9VSE5</accession>
<keyword id="KW-0227">DNA damage</keyword>
<keyword id="KW-0228">DNA excision</keyword>
<keyword id="KW-0234">DNA repair</keyword>
<keyword id="KW-0255">Endonuclease</keyword>
<keyword id="KW-0378">Hydrolase</keyword>
<keyword id="KW-0540">Nuclease</keyword>
<proteinExistence type="inferred from homology"/>
<reference key="1">
    <citation type="journal article" date="2008" name="Chem. Biol. Interact.">
        <title>Extending the Bacillus cereus group genomics to putative food-borne pathogens of different toxicity.</title>
        <authorList>
            <person name="Lapidus A."/>
            <person name="Goltsman E."/>
            <person name="Auger S."/>
            <person name="Galleron N."/>
            <person name="Segurens B."/>
            <person name="Dossat C."/>
            <person name="Land M.L."/>
            <person name="Broussolle V."/>
            <person name="Brillard J."/>
            <person name="Guinebretiere M.-H."/>
            <person name="Sanchis V."/>
            <person name="Nguen-the C."/>
            <person name="Lereclus D."/>
            <person name="Richardson P."/>
            <person name="Wincker P."/>
            <person name="Weissenbach J."/>
            <person name="Ehrlich S.D."/>
            <person name="Sorokin A."/>
        </authorList>
    </citation>
    <scope>NUCLEOTIDE SEQUENCE [LARGE SCALE GENOMIC DNA]</scope>
    <source>
        <strain>KBAB4</strain>
    </source>
</reference>
<evidence type="ECO:0000250" key="1"/>
<evidence type="ECO:0000255" key="2">
    <source>
        <dbReference type="HAMAP-Rule" id="MF_00606"/>
    </source>
</evidence>
<sequence>MIIRFGYVSHATALWDCSPAKTMTFTSWKKLKKQEREDKLYNVTLQNLEHTIRILHYNIAHEIPLYRLSSSIVPLATHPEVEFDYIQIFAPLWRKIGALIQEHNLRVSFHPNQFTLFTSDKPHITTNAITDMTYHYNVLNAMGIADSSYINIHVGGAYGNKEKAIERFHENIQKLPYHIKRQMTLENDDKTYTTSETLAICQKEKIPFVFDYHHHIANLCNEPLEELLPMIFKTWSHTNVLPKVHISSPRSEKEFRAHADYIDLEFIKPFLHITKKINHNFDIMIESKQKDLAMLQLICELSSIRGIKRINSATLQW</sequence>